<keyword id="KW-1064">Adaptive immunity</keyword>
<keyword id="KW-1003">Cell membrane</keyword>
<keyword id="KW-0391">Immunity</keyword>
<keyword id="KW-0472">Membrane</keyword>
<keyword id="KW-0675">Receptor</keyword>
<keyword id="KW-1185">Reference proteome</keyword>
<keyword id="KW-1279">T cell receptor</keyword>
<feature type="chain" id="PRO_0000445808" description="T cell receptor delta joining 1">
    <location>
        <begin position="1" status="less than"/>
        <end position="16" status="greater than"/>
    </location>
</feature>
<feature type="non-terminal residue">
    <location>
        <position position="1"/>
    </location>
</feature>
<feature type="non-terminal residue">
    <location>
        <position position="16"/>
    </location>
</feature>
<protein>
    <recommendedName>
        <fullName evidence="6">T cell receptor delta joining 1</fullName>
    </recommendedName>
</protein>
<reference key="1">
    <citation type="journal article" date="2003" name="Nature">
        <title>The DNA sequence and analysis of human chromosome 14.</title>
        <authorList>
            <person name="Heilig R."/>
            <person name="Eckenberg R."/>
            <person name="Petit J.-L."/>
            <person name="Fonknechten N."/>
            <person name="Da Silva C."/>
            <person name="Cattolico L."/>
            <person name="Levy M."/>
            <person name="Barbe V."/>
            <person name="De Berardinis V."/>
            <person name="Ureta-Vidal A."/>
            <person name="Pelletier E."/>
            <person name="Vico V."/>
            <person name="Anthouard V."/>
            <person name="Rowen L."/>
            <person name="Madan A."/>
            <person name="Qin S."/>
            <person name="Sun H."/>
            <person name="Du H."/>
            <person name="Pepin K."/>
            <person name="Artiguenave F."/>
            <person name="Robert C."/>
            <person name="Cruaud C."/>
            <person name="Bruels T."/>
            <person name="Jaillon O."/>
            <person name="Friedlander L."/>
            <person name="Samson G."/>
            <person name="Brottier P."/>
            <person name="Cure S."/>
            <person name="Segurens B."/>
            <person name="Aniere F."/>
            <person name="Samain S."/>
            <person name="Crespeau H."/>
            <person name="Abbasi N."/>
            <person name="Aiach N."/>
            <person name="Boscus D."/>
            <person name="Dickhoff R."/>
            <person name="Dors M."/>
            <person name="Dubois I."/>
            <person name="Friedman C."/>
            <person name="Gouyvenoux M."/>
            <person name="James R."/>
            <person name="Madan A."/>
            <person name="Mairey-Estrada B."/>
            <person name="Mangenot S."/>
            <person name="Martins N."/>
            <person name="Menard M."/>
            <person name="Oztas S."/>
            <person name="Ratcliffe A."/>
            <person name="Shaffer T."/>
            <person name="Trask B."/>
            <person name="Vacherie B."/>
            <person name="Bellemere C."/>
            <person name="Belser C."/>
            <person name="Besnard-Gonnet M."/>
            <person name="Bartol-Mavel D."/>
            <person name="Boutard M."/>
            <person name="Briez-Silla S."/>
            <person name="Combette S."/>
            <person name="Dufosse-Laurent V."/>
            <person name="Ferron C."/>
            <person name="Lechaplais C."/>
            <person name="Louesse C."/>
            <person name="Muselet D."/>
            <person name="Magdelenat G."/>
            <person name="Pateau E."/>
            <person name="Petit E."/>
            <person name="Sirvain-Trukniewicz P."/>
            <person name="Trybou A."/>
            <person name="Vega-Czarny N."/>
            <person name="Bataille E."/>
            <person name="Bluet E."/>
            <person name="Bordelais I."/>
            <person name="Dubois M."/>
            <person name="Dumont C."/>
            <person name="Guerin T."/>
            <person name="Haffray S."/>
            <person name="Hammadi R."/>
            <person name="Muanga J."/>
            <person name="Pellouin V."/>
            <person name="Robert D."/>
            <person name="Wunderle E."/>
            <person name="Gauguet G."/>
            <person name="Roy A."/>
            <person name="Sainte-Marthe L."/>
            <person name="Verdier J."/>
            <person name="Verdier-Discala C."/>
            <person name="Hillier L.W."/>
            <person name="Fulton L."/>
            <person name="McPherson J."/>
            <person name="Matsuda F."/>
            <person name="Wilson R."/>
            <person name="Scarpelli C."/>
            <person name="Gyapay G."/>
            <person name="Wincker P."/>
            <person name="Saurin W."/>
            <person name="Quetier F."/>
            <person name="Waterston R."/>
            <person name="Hood L."/>
            <person name="Weissenbach J."/>
        </authorList>
    </citation>
    <scope>NUCLEOTIDE SEQUENCE [LARGE SCALE GENOMIC DNA] (IMGT ALLELE TRDJ1*01)</scope>
</reference>
<reference key="2">
    <citation type="book" date="2001" name="The T Cell Receptor FactsBook.">
        <title>The T Cell Receptor FactsBook.</title>
        <editorList>
            <person name="Lefranc M.P."/>
            <person name="Lefranc G."/>
        </editorList>
        <authorList>
            <person name="Lefranc M.P."/>
            <person name="Lefranc G."/>
        </authorList>
    </citation>
    <scope>NOMENCLATURE</scope>
</reference>
<reference key="3">
    <citation type="journal article" date="2013" name="Nat. Rev. Immunol.">
        <title>Six-of-the-best: unique contributions of gammadelta T cells to immunology.</title>
        <authorList>
            <person name="Vantourout P."/>
            <person name="Hayday A."/>
        </authorList>
    </citation>
    <scope>REVIEW ON FUNCTION AND ANTIGEN RECOGNITION</scope>
</reference>
<reference key="4">
    <citation type="journal article" date="2014" name="Annu. Rev. Immunol.">
        <title>gammadelta T cells: first line of defense and beyond.</title>
        <authorList>
            <person name="Chien Y.H."/>
            <person name="Meyer C."/>
            <person name="Bonneville M."/>
        </authorList>
    </citation>
    <scope>REVIEW ON GAMMA DELTA T CELL RECEPTOR DIVERSITY</scope>
</reference>
<reference key="5">
    <citation type="journal article" date="2014" name="Front. Immunol.">
        <title>Immunoglobulin and T Cell Receptor Genes: IMGT((R)) and the Birth and Rise of Immunoinformatics.</title>
        <authorList>
            <person name="Lefranc M.P."/>
        </authorList>
    </citation>
    <scope>NOMENCLATURE</scope>
</reference>
<reference key="6">
    <citation type="journal article" date="2015" name="Front. Immunol.">
        <title>Five Layers of Receptor Signaling in gammadelta T-Cell Differentiation and Activation.</title>
        <authorList>
            <person name="Ribeiro S.T."/>
            <person name="Ribot J.C."/>
            <person name="Silva-Santos B."/>
        </authorList>
    </citation>
    <scope>REVIEW ON T CELL RECEPTOR SIGNALING</scope>
    <scope>SUBUNIT</scope>
</reference>
<reference key="7">
    <citation type="journal article" date="2017" name="Nat. Rev. Immunol.">
        <title>gammadelta T cells in homeostasis and host defence of epithelial barrier tissues.</title>
        <authorList>
            <person name="Nielsen M.M."/>
            <person name="Witherden D.A."/>
            <person name="Havran W.L."/>
        </authorList>
    </citation>
    <scope>REVIEW ON FUNCTION</scope>
</reference>
<proteinExistence type="evidence at protein level"/>
<dbReference type="EMBL" id="AC244502">
    <property type="status" value="NOT_ANNOTATED_CDS"/>
    <property type="molecule type" value="Genomic_DNA"/>
</dbReference>
<dbReference type="IMGT_GENE-DB" id="TRDJ1"/>
<dbReference type="BioMuta" id="TRDJ1"/>
<dbReference type="Ensembl" id="ENST00000390473.1">
    <property type="protein sequence ID" value="ENSP00000452345.1"/>
    <property type="gene ID" value="ENSG00000211825.1"/>
</dbReference>
<dbReference type="UCSC" id="uc058zfe.1">
    <property type="organism name" value="human"/>
</dbReference>
<dbReference type="AGR" id="HGNC:12257"/>
<dbReference type="GeneCards" id="TRDJ1"/>
<dbReference type="HGNC" id="HGNC:12257">
    <property type="gene designation" value="TRDJ1"/>
</dbReference>
<dbReference type="HPA" id="ENSG00000211825">
    <property type="expression patterns" value="Tissue enhanced (bone marrow, lymphoid tissue)"/>
</dbReference>
<dbReference type="neXtProt" id="NX_A0A075B706"/>
<dbReference type="VEuPathDB" id="HostDB:ENSG00000211825"/>
<dbReference type="HOGENOM" id="CLU_221942_3_3_1"/>
<dbReference type="InParanoid" id="A0A075B706"/>
<dbReference type="PAN-GO" id="A0A075B706">
    <property type="GO annotations" value="0 GO annotations based on evolutionary models"/>
</dbReference>
<dbReference type="ChiTaRS" id="TRDJ1">
    <property type="organism name" value="human"/>
</dbReference>
<dbReference type="Pharos" id="A0A075B706">
    <property type="development level" value="Tdark"/>
</dbReference>
<dbReference type="PRO" id="PR:A0A075B706"/>
<dbReference type="Proteomes" id="UP000005640">
    <property type="component" value="Chromosome 14"/>
</dbReference>
<dbReference type="Bgee" id="ENSG00000211825">
    <property type="expression patterns" value="Expressed in granulocyte and 85 other cell types or tissues"/>
</dbReference>
<dbReference type="GO" id="GO:0042101">
    <property type="term" value="C:T cell receptor complex"/>
    <property type="evidence" value="ECO:0007669"/>
    <property type="project" value="UniProtKB-KW"/>
</dbReference>
<dbReference type="GO" id="GO:0002250">
    <property type="term" value="P:adaptive immune response"/>
    <property type="evidence" value="ECO:0007669"/>
    <property type="project" value="UniProtKB-KW"/>
</dbReference>
<gene>
    <name evidence="6" type="primary">TRDJ1</name>
</gene>
<sequence length="16" mass="1761">TDKLIFGKGTRVTVEP</sequence>
<evidence type="ECO:0000303" key="1">
    <source>
    </source>
</evidence>
<evidence type="ECO:0000303" key="2">
    <source>
    </source>
</evidence>
<evidence type="ECO:0000303" key="3">
    <source>
    </source>
</evidence>
<evidence type="ECO:0000303" key="4">
    <source>
    </source>
</evidence>
<evidence type="ECO:0000303" key="5">
    <source>
    </source>
</evidence>
<evidence type="ECO:0000303" key="6">
    <source ref="2"/>
</evidence>
<evidence type="ECO:0000305" key="7"/>
<organism>
    <name type="scientific">Homo sapiens</name>
    <name type="common">Human</name>
    <dbReference type="NCBI Taxonomy" id="9606"/>
    <lineage>
        <taxon>Eukaryota</taxon>
        <taxon>Metazoa</taxon>
        <taxon>Chordata</taxon>
        <taxon>Craniata</taxon>
        <taxon>Vertebrata</taxon>
        <taxon>Euteleostomi</taxon>
        <taxon>Mammalia</taxon>
        <taxon>Eutheria</taxon>
        <taxon>Euarchontoglires</taxon>
        <taxon>Primates</taxon>
        <taxon>Haplorrhini</taxon>
        <taxon>Catarrhini</taxon>
        <taxon>Hominidae</taxon>
        <taxon>Homo</taxon>
    </lineage>
</organism>
<accession>A0A075B706</accession>
<comment type="function">
    <text evidence="1 2 3 4 5">J region of the variable domain of T cell receptor (TR) delta chain that participates in the antigen recognition (PubMed:24600447). Gamma-delta TRs recognize a variety of self and foreign non-peptide antigens frequently expressed at the epithelial boundaries between the host and external environment, including endogenous lipids presented by MH-like protein CD1D and phosphoantigens presented by butyrophilin-like molecule BTN3A1. Upon antigen recognition induces rapid, innate-like immune responses involved in pathogen clearance and tissue repair (PubMed:23348415, PubMed:28920588). Binding of gamma-delta TR complex to antigen triggers phosphorylation of immunoreceptor tyrosine-based activation motifs (ITAMs) in the CD3 chains by the LCK and FYN kinases, allowing the recruitment, phosphorylation, and activation of ZAP70 that facilitates phosphorylation of the scaffolding proteins LCP2 and LAT. This lead to the formation of a supramolecular signalosome that recruits the phospholipase PLCG1, resulting in calcium mobilization and ERK activation, ultimately leading to T cell expansion and differentiation into effector cells (PubMed:25674089). Gamma-delta TRs are produced through somatic rearrangement of a limited repertoire of variable (V), diversity (D), and joining (J) genes. The potential diversity of gamma-delta TRs is conferred by the unique ability to rearrange (D) genes in tandem and to utilize all three reading frames. The combinatorial diversity is considerably increased by the sequence exonuclease trimming and random nucleotide (N) region additions which occur during the V-(D)-J rearrangements (PubMed:24387714).</text>
</comment>
<comment type="subunit">
    <text evidence="4">Gamma-delta TR is a heterodimer composed of a gamma and delta chain; disulfide-linked. The gamma-delta TR is associated with the transmembrane signaling CD3 coreceptor proteins following the stoichiometry: a single gamma-delta TR heterodimer associates with one CD3D-CD3E heterodimer, one CD3G-CD3E heterodimer and one CD247 homodimer forming a stable octameric structure. Upon activation, gamma-delta TR complex associates with FCER1G to initiate intracellular signaling.</text>
</comment>
<comment type="subcellular location">
    <subcellularLocation>
        <location evidence="7">Cell membrane</location>
    </subcellularLocation>
</comment>
<comment type="polymorphism">
    <text evidence="7">There are several alleles. The sequence shown is that of IMGT allele TRDJ1*01.</text>
</comment>
<comment type="caution">
    <text evidence="7">There are several genes encoding the J region in the T cell receptor delta locus. The peptide described in this entry is a representative for all the peptides encoded by these genes.</text>
</comment>
<name>TRDJ1_HUMAN</name>